<evidence type="ECO:0000255" key="1">
    <source>
        <dbReference type="HAMAP-Rule" id="MF_00008"/>
    </source>
</evidence>
<comment type="function">
    <text evidence="1">Catalyzes the reductive methylation of 2'-deoxyuridine-5'-monophosphate (dUMP) to 2'-deoxythymidine-5'-monophosphate (dTMP) while utilizing 5,10-methylenetetrahydrofolate (mTHF) as the methyl donor and reductant in the reaction, yielding dihydrofolate (DHF) as a by-product. This enzymatic reaction provides an intracellular de novo source of dTMP, an essential precursor for DNA biosynthesis.</text>
</comment>
<comment type="catalytic activity">
    <reaction evidence="1">
        <text>dUMP + (6R)-5,10-methylene-5,6,7,8-tetrahydrofolate = 7,8-dihydrofolate + dTMP</text>
        <dbReference type="Rhea" id="RHEA:12104"/>
        <dbReference type="ChEBI" id="CHEBI:15636"/>
        <dbReference type="ChEBI" id="CHEBI:57451"/>
        <dbReference type="ChEBI" id="CHEBI:63528"/>
        <dbReference type="ChEBI" id="CHEBI:246422"/>
        <dbReference type="EC" id="2.1.1.45"/>
    </reaction>
</comment>
<comment type="pathway">
    <text evidence="1">Pyrimidine metabolism; dTTP biosynthesis.</text>
</comment>
<comment type="subunit">
    <text evidence="1">Homodimer.</text>
</comment>
<comment type="subcellular location">
    <subcellularLocation>
        <location evidence="1">Cytoplasm</location>
    </subcellularLocation>
</comment>
<comment type="similarity">
    <text evidence="1">Belongs to the thymidylate synthase family. Bacterial-type ThyA subfamily.</text>
</comment>
<dbReference type="EC" id="2.1.1.45" evidence="1"/>
<dbReference type="EMBL" id="CP001638">
    <property type="protein sequence ID" value="ACS24376.1"/>
    <property type="molecule type" value="Genomic_DNA"/>
</dbReference>
<dbReference type="RefSeq" id="WP_015863833.1">
    <property type="nucleotide sequence ID" value="NZ_CP070511.1"/>
</dbReference>
<dbReference type="SMR" id="C5DAR2"/>
<dbReference type="STRING" id="471223.GWCH70_1581"/>
<dbReference type="GeneID" id="94900238"/>
<dbReference type="KEGG" id="gwc:GWCH70_1581"/>
<dbReference type="eggNOG" id="COG0207">
    <property type="taxonomic scope" value="Bacteria"/>
</dbReference>
<dbReference type="HOGENOM" id="CLU_021669_0_0_9"/>
<dbReference type="OrthoDB" id="9774633at2"/>
<dbReference type="UniPathway" id="UPA00575"/>
<dbReference type="GO" id="GO:0005829">
    <property type="term" value="C:cytosol"/>
    <property type="evidence" value="ECO:0007669"/>
    <property type="project" value="TreeGrafter"/>
</dbReference>
<dbReference type="GO" id="GO:0004799">
    <property type="term" value="F:thymidylate synthase activity"/>
    <property type="evidence" value="ECO:0007669"/>
    <property type="project" value="UniProtKB-UniRule"/>
</dbReference>
<dbReference type="GO" id="GO:0006231">
    <property type="term" value="P:dTMP biosynthetic process"/>
    <property type="evidence" value="ECO:0007669"/>
    <property type="project" value="UniProtKB-UniRule"/>
</dbReference>
<dbReference type="GO" id="GO:0006235">
    <property type="term" value="P:dTTP biosynthetic process"/>
    <property type="evidence" value="ECO:0007669"/>
    <property type="project" value="UniProtKB-UniRule"/>
</dbReference>
<dbReference type="GO" id="GO:0032259">
    <property type="term" value="P:methylation"/>
    <property type="evidence" value="ECO:0007669"/>
    <property type="project" value="UniProtKB-KW"/>
</dbReference>
<dbReference type="CDD" id="cd00351">
    <property type="entry name" value="TS_Pyrimidine_HMase"/>
    <property type="match status" value="1"/>
</dbReference>
<dbReference type="FunFam" id="3.30.572.10:FF:000001">
    <property type="entry name" value="Thymidylate synthase"/>
    <property type="match status" value="1"/>
</dbReference>
<dbReference type="Gene3D" id="3.30.572.10">
    <property type="entry name" value="Thymidylate synthase/dCMP hydroxymethylase domain"/>
    <property type="match status" value="1"/>
</dbReference>
<dbReference type="HAMAP" id="MF_00008">
    <property type="entry name" value="Thymidy_synth_bact"/>
    <property type="match status" value="1"/>
</dbReference>
<dbReference type="InterPro" id="IPR045097">
    <property type="entry name" value="Thymidate_synth/dCMP_Mease"/>
</dbReference>
<dbReference type="InterPro" id="IPR023451">
    <property type="entry name" value="Thymidate_synth/dCMP_Mease_dom"/>
</dbReference>
<dbReference type="InterPro" id="IPR036926">
    <property type="entry name" value="Thymidate_synth/dCMP_Mease_sf"/>
</dbReference>
<dbReference type="InterPro" id="IPR000398">
    <property type="entry name" value="Thymidylate_synthase"/>
</dbReference>
<dbReference type="InterPro" id="IPR020940">
    <property type="entry name" value="Thymidylate_synthase_AS"/>
</dbReference>
<dbReference type="NCBIfam" id="NF002497">
    <property type="entry name" value="PRK01827.1-3"/>
    <property type="match status" value="1"/>
</dbReference>
<dbReference type="NCBIfam" id="NF002499">
    <property type="entry name" value="PRK01827.1-5"/>
    <property type="match status" value="1"/>
</dbReference>
<dbReference type="NCBIfam" id="TIGR03284">
    <property type="entry name" value="thym_sym"/>
    <property type="match status" value="2"/>
</dbReference>
<dbReference type="PANTHER" id="PTHR11548:SF9">
    <property type="entry name" value="THYMIDYLATE SYNTHASE"/>
    <property type="match status" value="1"/>
</dbReference>
<dbReference type="PANTHER" id="PTHR11548">
    <property type="entry name" value="THYMIDYLATE SYNTHASE 1"/>
    <property type="match status" value="1"/>
</dbReference>
<dbReference type="Pfam" id="PF00303">
    <property type="entry name" value="Thymidylat_synt"/>
    <property type="match status" value="1"/>
</dbReference>
<dbReference type="PRINTS" id="PR00108">
    <property type="entry name" value="THYMDSNTHASE"/>
</dbReference>
<dbReference type="SUPFAM" id="SSF55831">
    <property type="entry name" value="Thymidylate synthase/dCMP hydroxymethylase"/>
    <property type="match status" value="1"/>
</dbReference>
<dbReference type="PROSITE" id="PS00091">
    <property type="entry name" value="THYMIDYLATE_SYNTHASE"/>
    <property type="match status" value="1"/>
</dbReference>
<keyword id="KW-0963">Cytoplasm</keyword>
<keyword id="KW-0489">Methyltransferase</keyword>
<keyword id="KW-0545">Nucleotide biosynthesis</keyword>
<keyword id="KW-0808">Transferase</keyword>
<proteinExistence type="inferred from homology"/>
<accession>C5DAR2</accession>
<protein>
    <recommendedName>
        <fullName evidence="1">Thymidylate synthase</fullName>
        <shortName evidence="1">TS</shortName>
        <shortName evidence="1">TSase</shortName>
        <ecNumber evidence="1">2.1.1.45</ecNumber>
    </recommendedName>
</protein>
<name>TYSY_GEOSW</name>
<reference key="1">
    <citation type="submission" date="2009-06" db="EMBL/GenBank/DDBJ databases">
        <title>Complete sequence of chromosome of Geopacillus sp. WCH70.</title>
        <authorList>
            <consortium name="US DOE Joint Genome Institute"/>
            <person name="Lucas S."/>
            <person name="Copeland A."/>
            <person name="Lapidus A."/>
            <person name="Glavina del Rio T."/>
            <person name="Dalin E."/>
            <person name="Tice H."/>
            <person name="Bruce D."/>
            <person name="Goodwin L."/>
            <person name="Pitluck S."/>
            <person name="Chertkov O."/>
            <person name="Brettin T."/>
            <person name="Detter J.C."/>
            <person name="Han C."/>
            <person name="Larimer F."/>
            <person name="Land M."/>
            <person name="Hauser L."/>
            <person name="Kyrpides N."/>
            <person name="Mikhailova N."/>
            <person name="Brumm P."/>
            <person name="Mead D.A."/>
            <person name="Richardson P."/>
        </authorList>
    </citation>
    <scope>NUCLEOTIDE SEQUENCE [LARGE SCALE GENOMIC DNA]</scope>
    <source>
        <strain>WCH70</strain>
    </source>
</reference>
<feature type="chain" id="PRO_1000201720" description="Thymidylate synthase">
    <location>
        <begin position="1"/>
        <end position="264"/>
    </location>
</feature>
<feature type="active site" description="Nucleophile" evidence="1">
    <location>
        <position position="146"/>
    </location>
</feature>
<feature type="binding site" description="in other chain" evidence="1">
    <location>
        <position position="21"/>
    </location>
    <ligand>
        <name>dUMP</name>
        <dbReference type="ChEBI" id="CHEBI:246422"/>
        <note>ligand shared between dimeric partners</note>
    </ligand>
</feature>
<feature type="binding site" evidence="1">
    <location>
        <position position="51"/>
    </location>
    <ligand>
        <name>(6R)-5,10-methylene-5,6,7,8-tetrahydrofolate</name>
        <dbReference type="ChEBI" id="CHEBI:15636"/>
    </ligand>
</feature>
<feature type="binding site" evidence="1">
    <location>
        <begin position="126"/>
        <end position="127"/>
    </location>
    <ligand>
        <name>dUMP</name>
        <dbReference type="ChEBI" id="CHEBI:246422"/>
        <note>ligand shared between dimeric partners</note>
    </ligand>
</feature>
<feature type="binding site" description="in other chain" evidence="1">
    <location>
        <begin position="166"/>
        <end position="169"/>
    </location>
    <ligand>
        <name>dUMP</name>
        <dbReference type="ChEBI" id="CHEBI:246422"/>
        <note>ligand shared between dimeric partners</note>
    </ligand>
</feature>
<feature type="binding site" evidence="1">
    <location>
        <position position="169"/>
    </location>
    <ligand>
        <name>(6R)-5,10-methylene-5,6,7,8-tetrahydrofolate</name>
        <dbReference type="ChEBI" id="CHEBI:15636"/>
    </ligand>
</feature>
<feature type="binding site" description="in other chain" evidence="1">
    <location>
        <position position="177"/>
    </location>
    <ligand>
        <name>dUMP</name>
        <dbReference type="ChEBI" id="CHEBI:246422"/>
        <note>ligand shared between dimeric partners</note>
    </ligand>
</feature>
<feature type="binding site" description="in other chain" evidence="1">
    <location>
        <begin position="207"/>
        <end position="209"/>
    </location>
    <ligand>
        <name>dUMP</name>
        <dbReference type="ChEBI" id="CHEBI:246422"/>
        <note>ligand shared between dimeric partners</note>
    </ligand>
</feature>
<feature type="binding site" evidence="1">
    <location>
        <position position="263"/>
    </location>
    <ligand>
        <name>(6R)-5,10-methylene-5,6,7,8-tetrahydrofolate</name>
        <dbReference type="ChEBI" id="CHEBI:15636"/>
    </ligand>
</feature>
<sequence>MRQYLQLLEDILENGVEKDDRTGVGTLSVFGRQLRFNLQEGFPLLTTKKLHIRSIIYELLWFLKGDTNVRYLQENGVTIWDEWADENGDLGPIYGAQWRSWKGADGKTVDQISWVIEEIKRNPNSRRLLVSAWNVAELDKMKLPPCHYAFQFYVADGKLSCMWQQRSVDTFLGLPFNIASYALLTHMIAQQCDLDVGELIFSGGDVHLYKNHLEQAKLQLTREPRPLPKLVIKRKPASIFEYEFEDFEIVDYDPHPHIKAPVAV</sequence>
<organism>
    <name type="scientific">Geobacillus sp. (strain WCH70)</name>
    <dbReference type="NCBI Taxonomy" id="471223"/>
    <lineage>
        <taxon>Bacteria</taxon>
        <taxon>Bacillati</taxon>
        <taxon>Bacillota</taxon>
        <taxon>Bacilli</taxon>
        <taxon>Bacillales</taxon>
        <taxon>Anoxybacillaceae</taxon>
        <taxon>Geobacillus</taxon>
    </lineage>
</organism>
<gene>
    <name evidence="1" type="primary">thyA</name>
    <name type="ordered locus">GWCH70_1581</name>
</gene>